<proteinExistence type="inferred from homology"/>
<evidence type="ECO:0000250" key="1"/>
<evidence type="ECO:0000305" key="2"/>
<keyword id="KW-0349">Heme</keyword>
<keyword id="KW-0379">Hydroxylation</keyword>
<keyword id="KW-0408">Iron</keyword>
<keyword id="KW-0479">Metal-binding</keyword>
<keyword id="KW-0561">Oxygen transport</keyword>
<keyword id="KW-1185">Reference proteome</keyword>
<keyword id="KW-0813">Transport</keyword>
<feature type="chain" id="PRO_0000162641" description="Group 2 truncated hemoglobin GlbO">
    <location>
        <begin position="1"/>
        <end position="128"/>
    </location>
</feature>
<feature type="binding site" description="proximal binding residue" evidence="1">
    <location>
        <position position="75"/>
    </location>
    <ligand>
        <name>heme</name>
        <dbReference type="ChEBI" id="CHEBI:30413"/>
    </ligand>
    <ligandPart>
        <name>Fe</name>
        <dbReference type="ChEBI" id="CHEBI:18248"/>
    </ligandPart>
</feature>
<feature type="modified residue" description="3',4'-dihydroxyphenylalanine" evidence="1">
    <location>
        <position position="36"/>
    </location>
</feature>
<feature type="cross-link" description="Isodityrosine (Tyr-Tyr)" evidence="1">
    <location>
        <begin position="23"/>
        <end position="36"/>
    </location>
</feature>
<comment type="cofactor">
    <cofactor evidence="1">
        <name>heme</name>
        <dbReference type="ChEBI" id="CHEBI:30413"/>
    </cofactor>
    <text evidence="1">Binds 1 heme group per subunit.</text>
</comment>
<comment type="subunit">
    <text evidence="1">Homododecamer.</text>
</comment>
<comment type="PTM">
    <text>Contains L-DOPA (3',4'-dihydroxyphenylalanine).</text>
</comment>
<comment type="similarity">
    <text evidence="2">Belongs to the truncated hemoglobin family. Group II subfamily.</text>
</comment>
<gene>
    <name type="primary">glbO</name>
    <name type="ordered locus">BQ2027_MB2497</name>
</gene>
<accession>P0A596</accession>
<accession>A0A1R3Y192</accession>
<accession>O53197</accession>
<accession>X2BKY2</accession>
<reference key="1">
    <citation type="submission" date="1999-12" db="EMBL/GenBank/DDBJ databases">
        <title>Cloning, expression and characterization of an oxygen-binding protein encoded by glbO locus of Mycobacterium tuberculosis and Mycobacterium bovis.</title>
        <authorList>
            <person name="Pathania R."/>
            <person name="Ramandee P."/>
            <person name="Dikshit K.L."/>
        </authorList>
    </citation>
    <scope>NUCLEOTIDE SEQUENCE [GENOMIC DNA]</scope>
    <source>
        <strain>BCG</strain>
    </source>
</reference>
<reference key="2">
    <citation type="journal article" date="2003" name="Proc. Natl. Acad. Sci. U.S.A.">
        <title>The complete genome sequence of Mycobacterium bovis.</title>
        <authorList>
            <person name="Garnier T."/>
            <person name="Eiglmeier K."/>
            <person name="Camus J.-C."/>
            <person name="Medina N."/>
            <person name="Mansoor H."/>
            <person name="Pryor M."/>
            <person name="Duthoy S."/>
            <person name="Grondin S."/>
            <person name="Lacroix C."/>
            <person name="Monsempe C."/>
            <person name="Simon S."/>
            <person name="Harris B."/>
            <person name="Atkin R."/>
            <person name="Doggett J."/>
            <person name="Mayes R."/>
            <person name="Keating L."/>
            <person name="Wheeler P.R."/>
            <person name="Parkhill J."/>
            <person name="Barrell B.G."/>
            <person name="Cole S.T."/>
            <person name="Gordon S.V."/>
            <person name="Hewinson R.G."/>
        </authorList>
    </citation>
    <scope>NUCLEOTIDE SEQUENCE [LARGE SCALE GENOMIC DNA]</scope>
    <source>
        <strain>ATCC BAA-935 / AF2122/97</strain>
    </source>
</reference>
<reference key="3">
    <citation type="journal article" date="2017" name="Genome Announc.">
        <title>Updated reference genome sequence and annotation of Mycobacterium bovis AF2122/97.</title>
        <authorList>
            <person name="Malone K.M."/>
            <person name="Farrell D."/>
            <person name="Stuber T.P."/>
            <person name="Schubert O.T."/>
            <person name="Aebersold R."/>
            <person name="Robbe-Austerman S."/>
            <person name="Gordon S.V."/>
        </authorList>
    </citation>
    <scope>NUCLEOTIDE SEQUENCE [LARGE SCALE GENOMIC DNA]</scope>
    <scope>GENOME REANNOTATION</scope>
    <source>
        <strain>ATCC BAA-935 / AF2122/97</strain>
    </source>
</reference>
<organism>
    <name type="scientific">Mycobacterium bovis (strain ATCC BAA-935 / AF2122/97)</name>
    <dbReference type="NCBI Taxonomy" id="233413"/>
    <lineage>
        <taxon>Bacteria</taxon>
        <taxon>Bacillati</taxon>
        <taxon>Actinomycetota</taxon>
        <taxon>Actinomycetes</taxon>
        <taxon>Mycobacteriales</taxon>
        <taxon>Mycobacteriaceae</taxon>
        <taxon>Mycobacterium</taxon>
        <taxon>Mycobacterium tuberculosis complex</taxon>
    </lineage>
</organism>
<dbReference type="EMBL" id="AF213450">
    <property type="protein sequence ID" value="AAF36597.1"/>
    <property type="molecule type" value="Genomic_DNA"/>
</dbReference>
<dbReference type="EMBL" id="LT708304">
    <property type="protein sequence ID" value="SIU01113.1"/>
    <property type="molecule type" value="Genomic_DNA"/>
</dbReference>
<dbReference type="RefSeq" id="NP_856144.1">
    <property type="nucleotide sequence ID" value="NC_002945.3"/>
</dbReference>
<dbReference type="RefSeq" id="WP_003412688.1">
    <property type="nucleotide sequence ID" value="NC_002945.4"/>
</dbReference>
<dbReference type="SMR" id="P0A596"/>
<dbReference type="GeneID" id="45426463"/>
<dbReference type="KEGG" id="mbo:BQ2027_MB2497"/>
<dbReference type="PATRIC" id="fig|233413.5.peg.2749"/>
<dbReference type="Proteomes" id="UP000001419">
    <property type="component" value="Chromosome"/>
</dbReference>
<dbReference type="GO" id="GO:0020037">
    <property type="term" value="F:heme binding"/>
    <property type="evidence" value="ECO:0007669"/>
    <property type="project" value="InterPro"/>
</dbReference>
<dbReference type="GO" id="GO:0046872">
    <property type="term" value="F:metal ion binding"/>
    <property type="evidence" value="ECO:0007669"/>
    <property type="project" value="UniProtKB-KW"/>
</dbReference>
<dbReference type="GO" id="GO:0019825">
    <property type="term" value="F:oxygen binding"/>
    <property type="evidence" value="ECO:0007669"/>
    <property type="project" value="InterPro"/>
</dbReference>
<dbReference type="GO" id="GO:0005344">
    <property type="term" value="F:oxygen carrier activity"/>
    <property type="evidence" value="ECO:0007669"/>
    <property type="project" value="UniProtKB-KW"/>
</dbReference>
<dbReference type="CDD" id="cd14771">
    <property type="entry name" value="TrHb2_Mt-trHbO-like_O"/>
    <property type="match status" value="1"/>
</dbReference>
<dbReference type="FunFam" id="1.10.490.10:FF:000004">
    <property type="entry name" value="Group 2 hemoglobin yjbI"/>
    <property type="match status" value="1"/>
</dbReference>
<dbReference type="Gene3D" id="1.10.490.10">
    <property type="entry name" value="Globins"/>
    <property type="match status" value="1"/>
</dbReference>
<dbReference type="InterPro" id="IPR044203">
    <property type="entry name" value="GlbO/GLB3-like"/>
</dbReference>
<dbReference type="InterPro" id="IPR009050">
    <property type="entry name" value="Globin-like_sf"/>
</dbReference>
<dbReference type="InterPro" id="IPR012292">
    <property type="entry name" value="Globin/Proto"/>
</dbReference>
<dbReference type="InterPro" id="IPR019795">
    <property type="entry name" value="Globin_bac-like_CS"/>
</dbReference>
<dbReference type="InterPro" id="IPR001486">
    <property type="entry name" value="Hemoglobin_trunc"/>
</dbReference>
<dbReference type="PANTHER" id="PTHR47366">
    <property type="entry name" value="TWO-ON-TWO HEMOGLOBIN-3"/>
    <property type="match status" value="1"/>
</dbReference>
<dbReference type="PANTHER" id="PTHR47366:SF1">
    <property type="entry name" value="TWO-ON-TWO HEMOGLOBIN-3"/>
    <property type="match status" value="1"/>
</dbReference>
<dbReference type="Pfam" id="PF01152">
    <property type="entry name" value="Bac_globin"/>
    <property type="match status" value="1"/>
</dbReference>
<dbReference type="SUPFAM" id="SSF46458">
    <property type="entry name" value="Globin-like"/>
    <property type="match status" value="1"/>
</dbReference>
<dbReference type="PROSITE" id="PS01213">
    <property type="entry name" value="GLOBIN_FAM_2"/>
    <property type="match status" value="1"/>
</dbReference>
<protein>
    <recommendedName>
        <fullName>Group 2 truncated hemoglobin GlbO</fullName>
    </recommendedName>
    <alternativeName>
        <fullName>Hemoglobin-like protein HbO</fullName>
    </alternativeName>
    <alternativeName>
        <fullName>Truncated hemoglobin</fullName>
        <shortName>trHbO</shortName>
    </alternativeName>
</protein>
<sequence>MPKSFYDAVGGAKTFDAIVSRFYAQVAEDEVLRRVYPEDDLAGAEERLRMFLEQYWGGPRTYSEQRGHPRLRMRHAPFRISLIERDAWLRCMHTAVASIDSETLDDEHRRELLDYLEMAAHSLVNSPF</sequence>
<name>TRHBO_MYCBO</name>